<proteinExistence type="inferred from homology"/>
<organism>
    <name type="scientific">Burkholderia orbicola (strain AU 1054)</name>
    <dbReference type="NCBI Taxonomy" id="331271"/>
    <lineage>
        <taxon>Bacteria</taxon>
        <taxon>Pseudomonadati</taxon>
        <taxon>Pseudomonadota</taxon>
        <taxon>Betaproteobacteria</taxon>
        <taxon>Burkholderiales</taxon>
        <taxon>Burkholderiaceae</taxon>
        <taxon>Burkholderia</taxon>
        <taxon>Burkholderia cepacia complex</taxon>
        <taxon>Burkholderia orbicola</taxon>
    </lineage>
</organism>
<reference key="1">
    <citation type="submission" date="2006-05" db="EMBL/GenBank/DDBJ databases">
        <title>Complete sequence of chromosome 1 of Burkholderia cenocepacia AU 1054.</title>
        <authorList>
            <consortium name="US DOE Joint Genome Institute"/>
            <person name="Copeland A."/>
            <person name="Lucas S."/>
            <person name="Lapidus A."/>
            <person name="Barry K."/>
            <person name="Detter J.C."/>
            <person name="Glavina del Rio T."/>
            <person name="Hammon N."/>
            <person name="Israni S."/>
            <person name="Dalin E."/>
            <person name="Tice H."/>
            <person name="Pitluck S."/>
            <person name="Chain P."/>
            <person name="Malfatti S."/>
            <person name="Shin M."/>
            <person name="Vergez L."/>
            <person name="Schmutz J."/>
            <person name="Larimer F."/>
            <person name="Land M."/>
            <person name="Hauser L."/>
            <person name="Kyrpides N."/>
            <person name="Lykidis A."/>
            <person name="LiPuma J.J."/>
            <person name="Konstantinidis K."/>
            <person name="Tiedje J.M."/>
            <person name="Richardson P."/>
        </authorList>
    </citation>
    <scope>NUCLEOTIDE SEQUENCE [LARGE SCALE GENOMIC DNA]</scope>
    <source>
        <strain>AU 1054</strain>
    </source>
</reference>
<name>CBID_BURO1</name>
<feature type="chain" id="PRO_0000257750" description="Cobalt-precorrin-5B C(1)-methyltransferase">
    <location>
        <begin position="1"/>
        <end position="362"/>
    </location>
</feature>
<keyword id="KW-0169">Cobalamin biosynthesis</keyword>
<keyword id="KW-0489">Methyltransferase</keyword>
<keyword id="KW-0949">S-adenosyl-L-methionine</keyword>
<keyword id="KW-0808">Transferase</keyword>
<protein>
    <recommendedName>
        <fullName evidence="1">Cobalt-precorrin-5B C(1)-methyltransferase</fullName>
        <ecNumber evidence="1">2.1.1.195</ecNumber>
    </recommendedName>
    <alternativeName>
        <fullName evidence="1">Cobalt-precorrin-6A synthase</fullName>
    </alternativeName>
</protein>
<sequence length="362" mass="37438">MRDETPEQPAPLRFGYTTGSCATATSLAAARLLLAGQADDAVEIVLPKGQRVMMRLEFCRATADGAEAGTIKDAGDDPDVTHGALIFARVALAAAPGVRFHAGPGVGTVTRAGLTLPVGEPAINPVPRQMMTTHLEALAAEHGYAGGFDVTIGVEGGEALALKTMNPRLGIVGGLSILGTTGIVRPFSCSAYIASIHQGIDVARANGIAHIAACTGNASEDAMRAHYQLPDMALIEMGDFAGAVLKHLRRAPVARLSMCGGFGKLSKLAAGHLDLHSRHSSIDLPLLAQWAAEAGANEALQAAMRAANTSQEALKLAQADGVPLGDLVCAHALRVARDIVPPSVAVEMFAIDRQGRFVGAAR</sequence>
<evidence type="ECO:0000255" key="1">
    <source>
        <dbReference type="HAMAP-Rule" id="MF_00787"/>
    </source>
</evidence>
<dbReference type="EC" id="2.1.1.195" evidence="1"/>
<dbReference type="EMBL" id="CP000378">
    <property type="protein sequence ID" value="ABF76103.1"/>
    <property type="molecule type" value="Genomic_DNA"/>
</dbReference>
<dbReference type="SMR" id="Q1BWA2"/>
<dbReference type="HOGENOM" id="CLU_041273_0_0_4"/>
<dbReference type="UniPathway" id="UPA00148">
    <property type="reaction ID" value="UER00227"/>
</dbReference>
<dbReference type="GO" id="GO:0043780">
    <property type="term" value="F:cobalt-precorrin-5B C1-methyltransferase activity"/>
    <property type="evidence" value="ECO:0007669"/>
    <property type="project" value="RHEA"/>
</dbReference>
<dbReference type="GO" id="GO:0019251">
    <property type="term" value="P:anaerobic cobalamin biosynthetic process"/>
    <property type="evidence" value="ECO:0007669"/>
    <property type="project" value="UniProtKB-UniRule"/>
</dbReference>
<dbReference type="GO" id="GO:0032259">
    <property type="term" value="P:methylation"/>
    <property type="evidence" value="ECO:0007669"/>
    <property type="project" value="UniProtKB-KW"/>
</dbReference>
<dbReference type="Gene3D" id="3.30.2110.10">
    <property type="entry name" value="CbiD-like"/>
    <property type="match status" value="1"/>
</dbReference>
<dbReference type="HAMAP" id="MF_00787">
    <property type="entry name" value="CbiD"/>
    <property type="match status" value="1"/>
</dbReference>
<dbReference type="InterPro" id="IPR002748">
    <property type="entry name" value="CbiD"/>
</dbReference>
<dbReference type="InterPro" id="IPR036074">
    <property type="entry name" value="CbiD_sf"/>
</dbReference>
<dbReference type="NCBIfam" id="TIGR00312">
    <property type="entry name" value="cbiD"/>
    <property type="match status" value="1"/>
</dbReference>
<dbReference type="NCBIfam" id="NF000849">
    <property type="entry name" value="PRK00075.1-1"/>
    <property type="match status" value="1"/>
</dbReference>
<dbReference type="PANTHER" id="PTHR35863">
    <property type="entry name" value="COBALT-PRECORRIN-5B C(1)-METHYLTRANSFERASE"/>
    <property type="match status" value="1"/>
</dbReference>
<dbReference type="PANTHER" id="PTHR35863:SF1">
    <property type="entry name" value="COBALT-PRECORRIN-5B C(1)-METHYLTRANSFERASE"/>
    <property type="match status" value="1"/>
</dbReference>
<dbReference type="Pfam" id="PF01888">
    <property type="entry name" value="CbiD"/>
    <property type="match status" value="1"/>
</dbReference>
<dbReference type="PIRSF" id="PIRSF026782">
    <property type="entry name" value="CbiD"/>
    <property type="match status" value="1"/>
</dbReference>
<dbReference type="SUPFAM" id="SSF111342">
    <property type="entry name" value="CbiD-like"/>
    <property type="match status" value="1"/>
</dbReference>
<accession>Q1BWA2</accession>
<comment type="function">
    <text evidence="1">Catalyzes the methylation of C-1 in cobalt-precorrin-5B to form cobalt-precorrin-6A.</text>
</comment>
<comment type="catalytic activity">
    <reaction evidence="1">
        <text>Co-precorrin-5B + S-adenosyl-L-methionine = Co-precorrin-6A + S-adenosyl-L-homocysteine</text>
        <dbReference type="Rhea" id="RHEA:26285"/>
        <dbReference type="ChEBI" id="CHEBI:57856"/>
        <dbReference type="ChEBI" id="CHEBI:59789"/>
        <dbReference type="ChEBI" id="CHEBI:60063"/>
        <dbReference type="ChEBI" id="CHEBI:60064"/>
        <dbReference type="EC" id="2.1.1.195"/>
    </reaction>
</comment>
<comment type="pathway">
    <text evidence="1">Cofactor biosynthesis; adenosylcobalamin biosynthesis; cob(II)yrinate a,c-diamide from sirohydrochlorin (anaerobic route): step 6/10.</text>
</comment>
<comment type="similarity">
    <text evidence="1">Belongs to the CbiD family.</text>
</comment>
<gene>
    <name evidence="1" type="primary">cbiD</name>
    <name type="ordered locus">Bcen_1196</name>
</gene>